<sequence length="387" mass="45208">MLSIRRHAKTVASSCTNLTQKRTYVDVYMKWKRDPYFDNIEHILRSSQLKSVVSLKNCIVQEPNRCIPISAISKKTRQFDVSTKIAHFLRKFPSIFEEFVGPEYNLPWFRLTPEATELDRQERVVYQTSADDLRDRLKKLILMSKDNVLPLSIVQGMKWYLGLPDDYLQFPDMNLDSSFRFVDMEDGVKGLAVDYNGGDKVLSVLQKNAMKKRRGEVSLEEIEFPLFPSKGCRLRVKIEDWLMEFQKLPYVSPYDDYSCLDPSSDIAEKRVVGFLHELLCLFVEHSAERKKLLCLKKHFGLPQKVHKAFERHPQIFYLSMKNKTCTAILREPYRDKASVETHPVLGVRKKYIQLMKNSELILKSRRNSFGFRDEGVVDKDLDLDFEG</sequence>
<evidence type="ECO:0000255" key="1"/>
<evidence type="ECO:0000269" key="2">
    <source>
    </source>
</evidence>
<evidence type="ECO:0000303" key="3">
    <source>
    </source>
</evidence>
<evidence type="ECO:0000312" key="4">
    <source>
        <dbReference type="Araport" id="AT2G39120"/>
    </source>
</evidence>
<evidence type="ECO:0000312" key="5">
    <source>
        <dbReference type="EMBL" id="AAC79622.1"/>
    </source>
</evidence>
<accession>Q9ZUZ6</accession>
<organism>
    <name type="scientific">Arabidopsis thaliana</name>
    <name type="common">Mouse-ear cress</name>
    <dbReference type="NCBI Taxonomy" id="3702"/>
    <lineage>
        <taxon>Eukaryota</taxon>
        <taxon>Viridiplantae</taxon>
        <taxon>Streptophyta</taxon>
        <taxon>Embryophyta</taxon>
        <taxon>Tracheophyta</taxon>
        <taxon>Spermatophyta</taxon>
        <taxon>Magnoliopsida</taxon>
        <taxon>eudicotyledons</taxon>
        <taxon>Gunneridae</taxon>
        <taxon>Pentapetalae</taxon>
        <taxon>rosids</taxon>
        <taxon>malvids</taxon>
        <taxon>Brassicales</taxon>
        <taxon>Brassicaceae</taxon>
        <taxon>Camelineae</taxon>
        <taxon>Arabidopsis</taxon>
    </lineage>
</organism>
<proteinExistence type="predicted"/>
<protein>
    <recommendedName>
        <fullName evidence="3">Protein WHAT'S THIS FACTOR 9, mitochondrial</fullName>
    </recommendedName>
</protein>
<feature type="transit peptide" description="Mitochondrion" evidence="1">
    <location>
        <begin position="1"/>
        <end position="24"/>
    </location>
</feature>
<feature type="chain" id="PRO_0000445475" description="Protein WHAT'S THIS FACTOR 9, mitochondrial">
    <location>
        <begin position="25"/>
        <end position="387"/>
    </location>
</feature>
<feature type="domain" description="PORR" evidence="1">
    <location>
        <begin position="32"/>
        <end position="358"/>
    </location>
</feature>
<comment type="function">
    <text evidence="2">RNA-binding protein involved in group II intron splicing. Binds specific group II introns and promotes their splicing (e.g. rpl2 and ccmFC).</text>
</comment>
<comment type="subcellular location">
    <subcellularLocation>
        <location evidence="2">Mitochondrion</location>
    </subcellularLocation>
</comment>
<comment type="disruption phenotype">
    <text evidence="2">Severely stunted shoots and roots, small flowers with very small anthers and little pollen, and very small siliques containing only a few aborted seeds. Impaired splicing of rpl2 and ccmFC mRNAs. Absence of c-type cytochromes, complex III and cytochrome oxidase.</text>
</comment>
<name>WTF9_ARATH</name>
<reference key="1">
    <citation type="journal article" date="1999" name="Nature">
        <title>Sequence and analysis of chromosome 2 of the plant Arabidopsis thaliana.</title>
        <authorList>
            <person name="Lin X."/>
            <person name="Kaul S."/>
            <person name="Rounsley S.D."/>
            <person name="Shea T.P."/>
            <person name="Benito M.-I."/>
            <person name="Town C.D."/>
            <person name="Fujii C.Y."/>
            <person name="Mason T.M."/>
            <person name="Bowman C.L."/>
            <person name="Barnstead M.E."/>
            <person name="Feldblyum T.V."/>
            <person name="Buell C.R."/>
            <person name="Ketchum K.A."/>
            <person name="Lee J.J."/>
            <person name="Ronning C.M."/>
            <person name="Koo H.L."/>
            <person name="Moffat K.S."/>
            <person name="Cronin L.A."/>
            <person name="Shen M."/>
            <person name="Pai G."/>
            <person name="Van Aken S."/>
            <person name="Umayam L."/>
            <person name="Tallon L.J."/>
            <person name="Gill J.E."/>
            <person name="Adams M.D."/>
            <person name="Carrera A.J."/>
            <person name="Creasy T.H."/>
            <person name="Goodman H.M."/>
            <person name="Somerville C.R."/>
            <person name="Copenhaver G.P."/>
            <person name="Preuss D."/>
            <person name="Nierman W.C."/>
            <person name="White O."/>
            <person name="Eisen J.A."/>
            <person name="Salzberg S.L."/>
            <person name="Fraser C.M."/>
            <person name="Venter J.C."/>
        </authorList>
    </citation>
    <scope>NUCLEOTIDE SEQUENCE [LARGE SCALE GENOMIC DNA]</scope>
    <source>
        <strain>cv. Columbia</strain>
    </source>
</reference>
<reference key="2">
    <citation type="journal article" date="2017" name="Plant J.">
        <title>Araport11: a complete reannotation of the Arabidopsis thaliana reference genome.</title>
        <authorList>
            <person name="Cheng C.Y."/>
            <person name="Krishnakumar V."/>
            <person name="Chan A.P."/>
            <person name="Thibaud-Nissen F."/>
            <person name="Schobel S."/>
            <person name="Town C.D."/>
        </authorList>
    </citation>
    <scope>GENOME REANNOTATION</scope>
    <source>
        <strain>cv. Columbia</strain>
    </source>
</reference>
<reference key="3">
    <citation type="journal article" date="2012" name="Plant J.">
        <title>A PORR domain protein required for rpl2 and ccmF(C) intron splicing and for the biogenesis of c-type cytochromes in Arabidopsis mitochondria.</title>
        <authorList>
            <person name="des Francs-Small C.C."/>
            <person name="Kroeger T."/>
            <person name="Zmudjak M."/>
            <person name="Ostersetzer-Biran O."/>
            <person name="Rahimi N."/>
            <person name="Small I."/>
            <person name="Barkan A."/>
        </authorList>
    </citation>
    <scope>FUNCTION</scope>
    <scope>DISRUPTION PHENOTYPE</scope>
    <scope>SUBCELLULAR LOCATION</scope>
</reference>
<dbReference type="EMBL" id="AC005770">
    <property type="protein sequence ID" value="AAC79622.1"/>
    <property type="molecule type" value="Genomic_DNA"/>
</dbReference>
<dbReference type="EMBL" id="CP002685">
    <property type="protein sequence ID" value="AEC09637.1"/>
    <property type="molecule type" value="Genomic_DNA"/>
</dbReference>
<dbReference type="PIR" id="D84813">
    <property type="entry name" value="D84813"/>
</dbReference>
<dbReference type="RefSeq" id="NP_181445.1">
    <property type="nucleotide sequence ID" value="NM_129469.2"/>
</dbReference>
<dbReference type="FunCoup" id="Q9ZUZ6">
    <property type="interactions" value="368"/>
</dbReference>
<dbReference type="STRING" id="3702.Q9ZUZ6"/>
<dbReference type="PaxDb" id="3702-AT2G39120.1"/>
<dbReference type="ProteomicsDB" id="242726"/>
<dbReference type="EnsemblPlants" id="AT2G39120.1">
    <property type="protein sequence ID" value="AT2G39120.1"/>
    <property type="gene ID" value="AT2G39120"/>
</dbReference>
<dbReference type="GeneID" id="818498"/>
<dbReference type="Gramene" id="AT2G39120.1">
    <property type="protein sequence ID" value="AT2G39120.1"/>
    <property type="gene ID" value="AT2G39120"/>
</dbReference>
<dbReference type="KEGG" id="ath:AT2G39120"/>
<dbReference type="Araport" id="AT2G39120"/>
<dbReference type="TAIR" id="AT2G39120">
    <property type="gene designation" value="WTF9"/>
</dbReference>
<dbReference type="eggNOG" id="ENOG502QPKI">
    <property type="taxonomic scope" value="Eukaryota"/>
</dbReference>
<dbReference type="HOGENOM" id="CLU_024287_1_1_1"/>
<dbReference type="InParanoid" id="Q9ZUZ6"/>
<dbReference type="OMA" id="LCLRQHL"/>
<dbReference type="PhylomeDB" id="Q9ZUZ6"/>
<dbReference type="PRO" id="PR:Q9ZUZ6"/>
<dbReference type="Proteomes" id="UP000006548">
    <property type="component" value="Chromosome 2"/>
</dbReference>
<dbReference type="ExpressionAtlas" id="Q9ZUZ6">
    <property type="expression patterns" value="baseline and differential"/>
</dbReference>
<dbReference type="GO" id="GO:0005739">
    <property type="term" value="C:mitochondrion"/>
    <property type="evidence" value="ECO:0000314"/>
    <property type="project" value="TAIR"/>
</dbReference>
<dbReference type="GO" id="GO:0003723">
    <property type="term" value="F:RNA binding"/>
    <property type="evidence" value="ECO:0000314"/>
    <property type="project" value="TAIR"/>
</dbReference>
<dbReference type="GO" id="GO:0017004">
    <property type="term" value="P:cytochrome complex assembly"/>
    <property type="evidence" value="ECO:0000315"/>
    <property type="project" value="TAIR"/>
</dbReference>
<dbReference type="GO" id="GO:0000373">
    <property type="term" value="P:Group II intron splicing"/>
    <property type="evidence" value="ECO:0000315"/>
    <property type="project" value="TAIR"/>
</dbReference>
<dbReference type="GO" id="GO:0006397">
    <property type="term" value="P:mRNA processing"/>
    <property type="evidence" value="ECO:0007669"/>
    <property type="project" value="UniProtKB-KW"/>
</dbReference>
<dbReference type="InterPro" id="IPR021099">
    <property type="entry name" value="PORR_domain"/>
</dbReference>
<dbReference type="InterPro" id="IPR045040">
    <property type="entry name" value="PORR_fam"/>
</dbReference>
<dbReference type="PANTHER" id="PTHR31476">
    <property type="entry name" value="PROTEIN WHAT'S THIS FACTOR 1 HOMOLOG, CHLOROPLASTIC"/>
    <property type="match status" value="1"/>
</dbReference>
<dbReference type="PANTHER" id="PTHR31476:SF13">
    <property type="entry name" value="PROTEIN WHAT'S THIS FACTOR 9, MITOCHONDRIAL"/>
    <property type="match status" value="1"/>
</dbReference>
<dbReference type="Pfam" id="PF11955">
    <property type="entry name" value="PORR"/>
    <property type="match status" value="1"/>
</dbReference>
<keyword id="KW-0496">Mitochondrion</keyword>
<keyword id="KW-0507">mRNA processing</keyword>
<keyword id="KW-0508">mRNA splicing</keyword>
<keyword id="KW-1185">Reference proteome</keyword>
<keyword id="KW-0694">RNA-binding</keyword>
<keyword id="KW-0809">Transit peptide</keyword>
<gene>
    <name evidence="3" type="primary">WTF9</name>
    <name evidence="4" type="ordered locus">At2g39120</name>
    <name evidence="5" type="ORF">T7F6.29</name>
</gene>